<comment type="function">
    <text evidence="1">Binds the 23S rRNA.</text>
</comment>
<comment type="cofactor">
    <cofactor evidence="1">
        <name>Zn(2+)</name>
        <dbReference type="ChEBI" id="CHEBI:29105"/>
    </cofactor>
    <text evidence="1">Binds 1 zinc ion per subunit.</text>
</comment>
<comment type="subunit">
    <text evidence="1">Part of the 50S ribosomal subunit.</text>
</comment>
<comment type="similarity">
    <text evidence="1">Belongs to the bacterial ribosomal protein bL31 family. Type A subfamily.</text>
</comment>
<feature type="chain" id="PRO_1000176948" description="Large ribosomal subunit protein bL31">
    <location>
        <begin position="1"/>
        <end position="70"/>
    </location>
</feature>
<feature type="binding site" evidence="1">
    <location>
        <position position="16"/>
    </location>
    <ligand>
        <name>Zn(2+)</name>
        <dbReference type="ChEBI" id="CHEBI:29105"/>
    </ligand>
</feature>
<feature type="binding site" evidence="1">
    <location>
        <position position="18"/>
    </location>
    <ligand>
        <name>Zn(2+)</name>
        <dbReference type="ChEBI" id="CHEBI:29105"/>
    </ligand>
</feature>
<feature type="binding site" evidence="1">
    <location>
        <position position="38"/>
    </location>
    <ligand>
        <name>Zn(2+)</name>
        <dbReference type="ChEBI" id="CHEBI:29105"/>
    </ligand>
</feature>
<feature type="binding site" evidence="1">
    <location>
        <position position="41"/>
    </location>
    <ligand>
        <name>Zn(2+)</name>
        <dbReference type="ChEBI" id="CHEBI:29105"/>
    </ligand>
</feature>
<gene>
    <name evidence="1" type="primary">rpmE</name>
    <name type="ordered locus">Blon_0574</name>
    <name type="ordered locus">BLIJ_0578</name>
</gene>
<organism>
    <name type="scientific">Bifidobacterium longum subsp. infantis (strain ATCC 15697 / DSM 20088 / JCM 1222 / NCTC 11817 / S12)</name>
    <dbReference type="NCBI Taxonomy" id="391904"/>
    <lineage>
        <taxon>Bacteria</taxon>
        <taxon>Bacillati</taxon>
        <taxon>Actinomycetota</taxon>
        <taxon>Actinomycetes</taxon>
        <taxon>Bifidobacteriales</taxon>
        <taxon>Bifidobacteriaceae</taxon>
        <taxon>Bifidobacterium</taxon>
    </lineage>
</organism>
<keyword id="KW-0479">Metal-binding</keyword>
<keyword id="KW-0687">Ribonucleoprotein</keyword>
<keyword id="KW-0689">Ribosomal protein</keyword>
<keyword id="KW-0694">RNA-binding</keyword>
<keyword id="KW-0699">rRNA-binding</keyword>
<keyword id="KW-0862">Zinc</keyword>
<reference key="1">
    <citation type="journal article" date="2008" name="Proc. Natl. Acad. Sci. U.S.A.">
        <title>The genome sequence of Bifidobacterium longum subsp. infantis reveals adaptations for milk utilization within the infant microbiome.</title>
        <authorList>
            <person name="Sela D.A."/>
            <person name="Chapman J."/>
            <person name="Adeuya A."/>
            <person name="Kim J.H."/>
            <person name="Chen F."/>
            <person name="Whitehead T.R."/>
            <person name="Lapidus A."/>
            <person name="Rokhsar D.S."/>
            <person name="Lebrilla C.B."/>
            <person name="German J.B."/>
            <person name="Price N.P."/>
            <person name="Richardson P.M."/>
            <person name="Mills D.A."/>
        </authorList>
    </citation>
    <scope>NUCLEOTIDE SEQUENCE [LARGE SCALE GENOMIC DNA]</scope>
    <source>
        <strain>ATCC 15697 / DSM 20088 / JCM 1222 / NCTC 11817 / S12</strain>
    </source>
</reference>
<reference key="2">
    <citation type="journal article" date="2011" name="Nature">
        <title>Bifidobacteria can protect from enteropathogenic infection through production of acetate.</title>
        <authorList>
            <person name="Fukuda S."/>
            <person name="Toh H."/>
            <person name="Hase K."/>
            <person name="Oshima K."/>
            <person name="Nakanishi Y."/>
            <person name="Yoshimura K."/>
            <person name="Tobe T."/>
            <person name="Clarke J.M."/>
            <person name="Topping D.L."/>
            <person name="Suzuki T."/>
            <person name="Taylor T.D."/>
            <person name="Itoh K."/>
            <person name="Kikuchi J."/>
            <person name="Morita H."/>
            <person name="Hattori M."/>
            <person name="Ohno H."/>
        </authorList>
    </citation>
    <scope>NUCLEOTIDE SEQUENCE [LARGE SCALE GENOMIC DNA]</scope>
    <source>
        <strain>ATCC 15697 / DSM 20088 / JCM 1222 / NCTC 11817 / S12</strain>
    </source>
</reference>
<evidence type="ECO:0000255" key="1">
    <source>
        <dbReference type="HAMAP-Rule" id="MF_00501"/>
    </source>
</evidence>
<evidence type="ECO:0000305" key="2"/>
<proteinExistence type="inferred from homology"/>
<name>RL31_BIFLS</name>
<protein>
    <recommendedName>
        <fullName evidence="1">Large ribosomal subunit protein bL31</fullName>
    </recommendedName>
    <alternativeName>
        <fullName evidence="2">50S ribosomal protein L31</fullName>
    </alternativeName>
</protein>
<sequence>MQQGIHPDYHPVEVTCSCGNTFVTRTAGKEDHMFVDVCSQCHPFYTGKQKILDTGGRVARFEKRYGKKSK</sequence>
<accession>B7GP73</accession>
<accession>E8MQ96</accession>
<dbReference type="EMBL" id="CP001095">
    <property type="protein sequence ID" value="ACJ51685.1"/>
    <property type="molecule type" value="Genomic_DNA"/>
</dbReference>
<dbReference type="EMBL" id="AP010889">
    <property type="protein sequence ID" value="BAJ68171.1"/>
    <property type="molecule type" value="Genomic_DNA"/>
</dbReference>
<dbReference type="RefSeq" id="WP_003830110.1">
    <property type="nucleotide sequence ID" value="NZ_JDTT01000014.1"/>
</dbReference>
<dbReference type="SMR" id="B7GP73"/>
<dbReference type="GeneID" id="69578766"/>
<dbReference type="KEGG" id="bln:Blon_0574"/>
<dbReference type="KEGG" id="blon:BLIJ_0578"/>
<dbReference type="PATRIC" id="fig|391904.8.peg.577"/>
<dbReference type="HOGENOM" id="CLU_114306_4_3_11"/>
<dbReference type="Proteomes" id="UP000001360">
    <property type="component" value="Chromosome"/>
</dbReference>
<dbReference type="GO" id="GO:1990904">
    <property type="term" value="C:ribonucleoprotein complex"/>
    <property type="evidence" value="ECO:0007669"/>
    <property type="project" value="UniProtKB-KW"/>
</dbReference>
<dbReference type="GO" id="GO:0005840">
    <property type="term" value="C:ribosome"/>
    <property type="evidence" value="ECO:0007669"/>
    <property type="project" value="UniProtKB-KW"/>
</dbReference>
<dbReference type="GO" id="GO:0046872">
    <property type="term" value="F:metal ion binding"/>
    <property type="evidence" value="ECO:0007669"/>
    <property type="project" value="UniProtKB-KW"/>
</dbReference>
<dbReference type="GO" id="GO:0019843">
    <property type="term" value="F:rRNA binding"/>
    <property type="evidence" value="ECO:0007669"/>
    <property type="project" value="UniProtKB-KW"/>
</dbReference>
<dbReference type="GO" id="GO:0003735">
    <property type="term" value="F:structural constituent of ribosome"/>
    <property type="evidence" value="ECO:0007669"/>
    <property type="project" value="InterPro"/>
</dbReference>
<dbReference type="GO" id="GO:0006412">
    <property type="term" value="P:translation"/>
    <property type="evidence" value="ECO:0007669"/>
    <property type="project" value="UniProtKB-UniRule"/>
</dbReference>
<dbReference type="Gene3D" id="4.10.830.30">
    <property type="entry name" value="Ribosomal protein L31"/>
    <property type="match status" value="1"/>
</dbReference>
<dbReference type="HAMAP" id="MF_00501">
    <property type="entry name" value="Ribosomal_bL31_1"/>
    <property type="match status" value="1"/>
</dbReference>
<dbReference type="InterPro" id="IPR034704">
    <property type="entry name" value="Ribosomal_bL28/bL31-like_sf"/>
</dbReference>
<dbReference type="InterPro" id="IPR002150">
    <property type="entry name" value="Ribosomal_bL31"/>
</dbReference>
<dbReference type="InterPro" id="IPR027491">
    <property type="entry name" value="Ribosomal_bL31_A"/>
</dbReference>
<dbReference type="InterPro" id="IPR042105">
    <property type="entry name" value="Ribosomal_bL31_sf"/>
</dbReference>
<dbReference type="NCBIfam" id="TIGR00105">
    <property type="entry name" value="L31"/>
    <property type="match status" value="1"/>
</dbReference>
<dbReference type="NCBIfam" id="NF000612">
    <property type="entry name" value="PRK00019.1"/>
    <property type="match status" value="1"/>
</dbReference>
<dbReference type="NCBIfam" id="NF001809">
    <property type="entry name" value="PRK00528.1"/>
    <property type="match status" value="1"/>
</dbReference>
<dbReference type="PANTHER" id="PTHR33280">
    <property type="entry name" value="50S RIBOSOMAL PROTEIN L31, CHLOROPLASTIC"/>
    <property type="match status" value="1"/>
</dbReference>
<dbReference type="PANTHER" id="PTHR33280:SF1">
    <property type="entry name" value="LARGE RIBOSOMAL SUBUNIT PROTEIN BL31C"/>
    <property type="match status" value="1"/>
</dbReference>
<dbReference type="Pfam" id="PF01197">
    <property type="entry name" value="Ribosomal_L31"/>
    <property type="match status" value="1"/>
</dbReference>
<dbReference type="PRINTS" id="PR01249">
    <property type="entry name" value="RIBOSOMALL31"/>
</dbReference>
<dbReference type="SUPFAM" id="SSF143800">
    <property type="entry name" value="L28p-like"/>
    <property type="match status" value="1"/>
</dbReference>
<dbReference type="PROSITE" id="PS01143">
    <property type="entry name" value="RIBOSOMAL_L31"/>
    <property type="match status" value="1"/>
</dbReference>